<protein>
    <recommendedName>
        <fullName>UDP-glycosyltransferase 76E7</fullName>
        <ecNumber>2.4.1.-</ecNumber>
    </recommendedName>
</protein>
<gene>
    <name type="primary">UGT76E7</name>
    <name type="ordered locus">At5g38040</name>
    <name type="ORF">F16F17.40</name>
</gene>
<reference key="1">
    <citation type="submission" date="1999-06" db="EMBL/GenBank/DDBJ databases">
        <title>Structural analysis of Arabidopsis thaliana chromosome 5. XI.</title>
        <authorList>
            <person name="Kaneko T."/>
            <person name="Katoh T."/>
            <person name="Asamizu E."/>
            <person name="Sato S."/>
            <person name="Nakamura Y."/>
            <person name="Kotani H."/>
            <person name="Tabata S."/>
        </authorList>
    </citation>
    <scope>NUCLEOTIDE SEQUENCE [LARGE SCALE GENOMIC DNA]</scope>
    <source>
        <strain>cv. Columbia</strain>
    </source>
</reference>
<reference key="2">
    <citation type="journal article" date="2017" name="Plant J.">
        <title>Araport11: a complete reannotation of the Arabidopsis thaliana reference genome.</title>
        <authorList>
            <person name="Cheng C.Y."/>
            <person name="Krishnakumar V."/>
            <person name="Chan A.P."/>
            <person name="Thibaud-Nissen F."/>
            <person name="Schobel S."/>
            <person name="Town C.D."/>
        </authorList>
    </citation>
    <scope>GENOME REANNOTATION</scope>
    <source>
        <strain>cv. Columbia</strain>
    </source>
</reference>
<reference key="3">
    <citation type="journal article" date="2001" name="J. Biol. Chem.">
        <title>Phylogenetic analysis of the UDP-glycosyltransferase multigene family of Arabidopsis thaliana.</title>
        <authorList>
            <person name="Li Y."/>
            <person name="Baldauf S."/>
            <person name="Lim E.K."/>
            <person name="Bowles D.J."/>
        </authorList>
    </citation>
    <scope>GENE FAMILY</scope>
</reference>
<keyword id="KW-0328">Glycosyltransferase</keyword>
<keyword id="KW-1185">Reference proteome</keyword>
<keyword id="KW-0808">Transferase</keyword>
<organism>
    <name type="scientific">Arabidopsis thaliana</name>
    <name type="common">Mouse-ear cress</name>
    <dbReference type="NCBI Taxonomy" id="3702"/>
    <lineage>
        <taxon>Eukaryota</taxon>
        <taxon>Viridiplantae</taxon>
        <taxon>Streptophyta</taxon>
        <taxon>Embryophyta</taxon>
        <taxon>Tracheophyta</taxon>
        <taxon>Spermatophyta</taxon>
        <taxon>Magnoliopsida</taxon>
        <taxon>eudicotyledons</taxon>
        <taxon>Gunneridae</taxon>
        <taxon>Pentapetalae</taxon>
        <taxon>rosids</taxon>
        <taxon>malvids</taxon>
        <taxon>Brassicales</taxon>
        <taxon>Brassicaceae</taxon>
        <taxon>Camelineae</taxon>
        <taxon>Arabidopsis</taxon>
    </lineage>
</organism>
<sequence>MEEKLSRRRRVVLVPVPAQGHITPMIQLAKALHSKGFSITVVQTKFNYLNPSNDLSDFQFVTIPENLPVSDLKNLGPGRFLIKLANECYVSFKDLLGQLLVNEEEEIACVIYDEFMYFVEVAVKEFKLRNVILSTTSATAFVCRFVMCELYAKDGLAQLKEGGEREVELVPELYPIRYKDLPSSVFASVESSVELFKNTCYKGTASSVIINTVRCLEMSSLEWLQQELEIPVYSIGPLHMVVSAPPTSLLEENESCIEWLNKQKPSSVIYISLGSFTLMETKEMLEMAYGFVSSNQHFLWVIRPGSICGSEISEEELLKKMVITDRGYIVKWAPQKQVLAHSAVGAFWSHCGWNSTLESLGEGVPLICRPFTTDQKGNARYLECVWKVGIQVEGELERGAIERAVKRLMVDEEGEEMKRRALSLKEKLKASVLAQGSSHKSLDDFIKTL</sequence>
<evidence type="ECO:0000250" key="1"/>
<evidence type="ECO:0000305" key="2"/>
<comment type="similarity">
    <text evidence="2">Belongs to the UDP-glycosyltransferase family.</text>
</comment>
<accession>Q9LS16</accession>
<proteinExistence type="evidence at transcript level"/>
<name>U76E7_ARATH</name>
<feature type="chain" id="PRO_0000409092" description="UDP-glycosyltransferase 76E7">
    <location>
        <begin position="1"/>
        <end position="449"/>
    </location>
</feature>
<feature type="binding site" evidence="1">
    <location>
        <position position="275"/>
    </location>
    <ligand>
        <name>UDP-alpha-D-glucose</name>
        <dbReference type="ChEBI" id="CHEBI:58885"/>
    </ligand>
</feature>
<feature type="binding site" evidence="1">
    <location>
        <begin position="333"/>
        <end position="335"/>
    </location>
    <ligand>
        <name>UDP-alpha-D-glucose</name>
        <dbReference type="ChEBI" id="CHEBI:58885"/>
    </ligand>
</feature>
<feature type="binding site" evidence="1">
    <location>
        <begin position="350"/>
        <end position="358"/>
    </location>
    <ligand>
        <name>UDP-alpha-D-glucose</name>
        <dbReference type="ChEBI" id="CHEBI:58885"/>
    </ligand>
</feature>
<feature type="binding site" evidence="1">
    <location>
        <begin position="372"/>
        <end position="375"/>
    </location>
    <ligand>
        <name>UDP-alpha-D-glucose</name>
        <dbReference type="ChEBI" id="CHEBI:58885"/>
    </ligand>
</feature>
<dbReference type="EC" id="2.4.1.-"/>
<dbReference type="EMBL" id="AB028606">
    <property type="protein sequence ID" value="BAA97538.1"/>
    <property type="molecule type" value="Genomic_DNA"/>
</dbReference>
<dbReference type="EMBL" id="CP002688">
    <property type="protein sequence ID" value="AED94260.1"/>
    <property type="molecule type" value="Genomic_DNA"/>
</dbReference>
<dbReference type="RefSeq" id="NP_198620.1">
    <property type="nucleotide sequence ID" value="NM_123164.2"/>
</dbReference>
<dbReference type="SMR" id="Q9LS16"/>
<dbReference type="FunCoup" id="Q9LS16">
    <property type="interactions" value="252"/>
</dbReference>
<dbReference type="CAZy" id="GT1">
    <property type="family name" value="Glycosyltransferase Family 1"/>
</dbReference>
<dbReference type="PaxDb" id="3702-AT5G38040.1"/>
<dbReference type="ProteomicsDB" id="242617"/>
<dbReference type="EnsemblPlants" id="AT5G38040.1">
    <property type="protein sequence ID" value="AT5G38040.1"/>
    <property type="gene ID" value="AT5G38040"/>
</dbReference>
<dbReference type="GeneID" id="833784"/>
<dbReference type="Gramene" id="AT5G38040.1">
    <property type="protein sequence ID" value="AT5G38040.1"/>
    <property type="gene ID" value="AT5G38040"/>
</dbReference>
<dbReference type="KEGG" id="ath:AT5G38040"/>
<dbReference type="Araport" id="AT5G38040"/>
<dbReference type="TAIR" id="AT5G38040"/>
<dbReference type="eggNOG" id="KOG1192">
    <property type="taxonomic scope" value="Eukaryota"/>
</dbReference>
<dbReference type="HOGENOM" id="CLU_001724_0_0_1"/>
<dbReference type="InParanoid" id="Q9LS16"/>
<dbReference type="OMA" id="QPEKYLP"/>
<dbReference type="OrthoDB" id="5835829at2759"/>
<dbReference type="PhylomeDB" id="Q9LS16"/>
<dbReference type="BioCyc" id="ARA:AT5G38040-MONOMER"/>
<dbReference type="PRO" id="PR:Q9LS16"/>
<dbReference type="Proteomes" id="UP000006548">
    <property type="component" value="Chromosome 5"/>
</dbReference>
<dbReference type="ExpressionAtlas" id="Q9LS16">
    <property type="expression patterns" value="baseline and differential"/>
</dbReference>
<dbReference type="GO" id="GO:0008194">
    <property type="term" value="F:UDP-glycosyltransferase activity"/>
    <property type="evidence" value="ECO:0007669"/>
    <property type="project" value="InterPro"/>
</dbReference>
<dbReference type="CDD" id="cd03784">
    <property type="entry name" value="GT1_Gtf-like"/>
    <property type="match status" value="1"/>
</dbReference>
<dbReference type="FunFam" id="3.40.50.2000:FF:000040">
    <property type="entry name" value="UDP-glycosyltransferase 76C1"/>
    <property type="match status" value="1"/>
</dbReference>
<dbReference type="FunFam" id="3.40.50.2000:FF:000151">
    <property type="entry name" value="UDP-glycosyltransferase 76E9"/>
    <property type="match status" value="1"/>
</dbReference>
<dbReference type="Gene3D" id="3.40.50.2000">
    <property type="entry name" value="Glycogen Phosphorylase B"/>
    <property type="match status" value="2"/>
</dbReference>
<dbReference type="InterPro" id="IPR002213">
    <property type="entry name" value="UDP_glucos_trans"/>
</dbReference>
<dbReference type="PANTHER" id="PTHR11926:SF1494">
    <property type="entry name" value="FLAVONOL 3-O-GLUCOSYLTRANSFERASE UGT76E12-RELATED"/>
    <property type="match status" value="1"/>
</dbReference>
<dbReference type="PANTHER" id="PTHR11926">
    <property type="entry name" value="GLUCOSYL/GLUCURONOSYL TRANSFERASES"/>
    <property type="match status" value="1"/>
</dbReference>
<dbReference type="Pfam" id="PF00201">
    <property type="entry name" value="UDPGT"/>
    <property type="match status" value="1"/>
</dbReference>
<dbReference type="SUPFAM" id="SSF53756">
    <property type="entry name" value="UDP-Glycosyltransferase/glycogen phosphorylase"/>
    <property type="match status" value="1"/>
</dbReference>